<dbReference type="EMBL" id="CP001389">
    <property type="protein sequence ID" value="ACP24824.1"/>
    <property type="molecule type" value="Genomic_DNA"/>
</dbReference>
<dbReference type="RefSeq" id="WP_012707608.1">
    <property type="nucleotide sequence ID" value="NC_012587.1"/>
</dbReference>
<dbReference type="RefSeq" id="YP_002825577.1">
    <property type="nucleotide sequence ID" value="NC_012587.1"/>
</dbReference>
<dbReference type="SMR" id="C3MA45"/>
<dbReference type="STRING" id="394.NGR_c10350"/>
<dbReference type="KEGG" id="rhi:NGR_c10350"/>
<dbReference type="PATRIC" id="fig|394.7.peg.3857"/>
<dbReference type="eggNOG" id="COG1219">
    <property type="taxonomic scope" value="Bacteria"/>
</dbReference>
<dbReference type="HOGENOM" id="CLU_014218_8_2_5"/>
<dbReference type="OrthoDB" id="9804062at2"/>
<dbReference type="Proteomes" id="UP000001054">
    <property type="component" value="Chromosome"/>
</dbReference>
<dbReference type="GO" id="GO:0009376">
    <property type="term" value="C:HslUV protease complex"/>
    <property type="evidence" value="ECO:0007669"/>
    <property type="project" value="TreeGrafter"/>
</dbReference>
<dbReference type="GO" id="GO:0005524">
    <property type="term" value="F:ATP binding"/>
    <property type="evidence" value="ECO:0007669"/>
    <property type="project" value="UniProtKB-UniRule"/>
</dbReference>
<dbReference type="GO" id="GO:0016887">
    <property type="term" value="F:ATP hydrolysis activity"/>
    <property type="evidence" value="ECO:0007669"/>
    <property type="project" value="InterPro"/>
</dbReference>
<dbReference type="GO" id="GO:0140662">
    <property type="term" value="F:ATP-dependent protein folding chaperone"/>
    <property type="evidence" value="ECO:0007669"/>
    <property type="project" value="InterPro"/>
</dbReference>
<dbReference type="GO" id="GO:0046983">
    <property type="term" value="F:protein dimerization activity"/>
    <property type="evidence" value="ECO:0007669"/>
    <property type="project" value="InterPro"/>
</dbReference>
<dbReference type="GO" id="GO:0051082">
    <property type="term" value="F:unfolded protein binding"/>
    <property type="evidence" value="ECO:0007669"/>
    <property type="project" value="UniProtKB-UniRule"/>
</dbReference>
<dbReference type="GO" id="GO:0008270">
    <property type="term" value="F:zinc ion binding"/>
    <property type="evidence" value="ECO:0007669"/>
    <property type="project" value="InterPro"/>
</dbReference>
<dbReference type="GO" id="GO:0051301">
    <property type="term" value="P:cell division"/>
    <property type="evidence" value="ECO:0007669"/>
    <property type="project" value="TreeGrafter"/>
</dbReference>
<dbReference type="GO" id="GO:0051603">
    <property type="term" value="P:proteolysis involved in protein catabolic process"/>
    <property type="evidence" value="ECO:0007669"/>
    <property type="project" value="TreeGrafter"/>
</dbReference>
<dbReference type="CDD" id="cd19497">
    <property type="entry name" value="RecA-like_ClpX"/>
    <property type="match status" value="1"/>
</dbReference>
<dbReference type="FunFam" id="1.10.8.60:FF:000002">
    <property type="entry name" value="ATP-dependent Clp protease ATP-binding subunit ClpX"/>
    <property type="match status" value="1"/>
</dbReference>
<dbReference type="FunFam" id="3.40.50.300:FF:000005">
    <property type="entry name" value="ATP-dependent Clp protease ATP-binding subunit ClpX"/>
    <property type="match status" value="1"/>
</dbReference>
<dbReference type="Gene3D" id="1.10.8.60">
    <property type="match status" value="1"/>
</dbReference>
<dbReference type="Gene3D" id="6.20.220.10">
    <property type="entry name" value="ClpX chaperone, C4-type zinc finger domain"/>
    <property type="match status" value="1"/>
</dbReference>
<dbReference type="Gene3D" id="3.40.50.300">
    <property type="entry name" value="P-loop containing nucleotide triphosphate hydrolases"/>
    <property type="match status" value="1"/>
</dbReference>
<dbReference type="HAMAP" id="MF_00175">
    <property type="entry name" value="ClpX"/>
    <property type="match status" value="1"/>
</dbReference>
<dbReference type="InterPro" id="IPR003593">
    <property type="entry name" value="AAA+_ATPase"/>
</dbReference>
<dbReference type="InterPro" id="IPR050052">
    <property type="entry name" value="ATP-dep_Clp_protease_ClpX"/>
</dbReference>
<dbReference type="InterPro" id="IPR003959">
    <property type="entry name" value="ATPase_AAA_core"/>
</dbReference>
<dbReference type="InterPro" id="IPR019489">
    <property type="entry name" value="Clp_ATPase_C"/>
</dbReference>
<dbReference type="InterPro" id="IPR004487">
    <property type="entry name" value="Clp_protease_ATP-bd_su_ClpX"/>
</dbReference>
<dbReference type="InterPro" id="IPR046425">
    <property type="entry name" value="ClpX_bact"/>
</dbReference>
<dbReference type="InterPro" id="IPR027417">
    <property type="entry name" value="P-loop_NTPase"/>
</dbReference>
<dbReference type="InterPro" id="IPR010603">
    <property type="entry name" value="Znf_CppX_C4"/>
</dbReference>
<dbReference type="InterPro" id="IPR038366">
    <property type="entry name" value="Znf_CppX_C4_sf"/>
</dbReference>
<dbReference type="NCBIfam" id="TIGR00382">
    <property type="entry name" value="clpX"/>
    <property type="match status" value="1"/>
</dbReference>
<dbReference type="NCBIfam" id="NF003745">
    <property type="entry name" value="PRK05342.1"/>
    <property type="match status" value="1"/>
</dbReference>
<dbReference type="PANTHER" id="PTHR48102:SF7">
    <property type="entry name" value="ATP-DEPENDENT CLP PROTEASE ATP-BINDING SUBUNIT CLPX-LIKE, MITOCHONDRIAL"/>
    <property type="match status" value="1"/>
</dbReference>
<dbReference type="PANTHER" id="PTHR48102">
    <property type="entry name" value="ATP-DEPENDENT CLP PROTEASE ATP-BINDING SUBUNIT CLPX-LIKE, MITOCHONDRIAL-RELATED"/>
    <property type="match status" value="1"/>
</dbReference>
<dbReference type="Pfam" id="PF07724">
    <property type="entry name" value="AAA_2"/>
    <property type="match status" value="1"/>
</dbReference>
<dbReference type="Pfam" id="PF10431">
    <property type="entry name" value="ClpB_D2-small"/>
    <property type="match status" value="1"/>
</dbReference>
<dbReference type="Pfam" id="PF06689">
    <property type="entry name" value="zf-C4_ClpX"/>
    <property type="match status" value="1"/>
</dbReference>
<dbReference type="SMART" id="SM00382">
    <property type="entry name" value="AAA"/>
    <property type="match status" value="1"/>
</dbReference>
<dbReference type="SMART" id="SM01086">
    <property type="entry name" value="ClpB_D2-small"/>
    <property type="match status" value="1"/>
</dbReference>
<dbReference type="SMART" id="SM00994">
    <property type="entry name" value="zf-C4_ClpX"/>
    <property type="match status" value="1"/>
</dbReference>
<dbReference type="SUPFAM" id="SSF57716">
    <property type="entry name" value="Glucocorticoid receptor-like (DNA-binding domain)"/>
    <property type="match status" value="1"/>
</dbReference>
<dbReference type="SUPFAM" id="SSF52540">
    <property type="entry name" value="P-loop containing nucleoside triphosphate hydrolases"/>
    <property type="match status" value="1"/>
</dbReference>
<dbReference type="PROSITE" id="PS51902">
    <property type="entry name" value="CLPX_ZB"/>
    <property type="match status" value="1"/>
</dbReference>
<accession>C3MA45</accession>
<sequence length="425" mass="46984">MSKVSGSNGGDSKNTLYCSFCGKSQHEVRKLIAGPTVFICDECVELCMDIIREENKTSMVKSRDGVPTPQEIIKVLDEYVIGQQQAKRILSVAVHNHYKRLAHAAKSSDVELAKSNIMLVGPTGCGKTYLAQTLARIIDVPFTMADATTLTEAGYVGEDVENIILKLLQAADYNVERAQRGIVYIDEVDKISRKSDNPSITRDVSGEGVQQALLKIMEGTVASVPPQGGRKHPQQEFLQVDTTNILFICGGAFAGLDKIISARGEKTSIGFGATVRSPEDRRVGEVLRELEPEDLVKFGLIPEFIGRLPVLATLEDLDEDALIQILSEPKNALIKQYQRLFEMEDVELTFHEDALREIAKRAIIRKTGARGLRSIMEKILLDTMFELPTLEGVREVVISDEVVKGTARPLYIYSDRSEEKTNVSA</sequence>
<comment type="function">
    <text evidence="1">ATP-dependent specificity component of the Clp protease. It directs the protease to specific substrates. Can perform chaperone functions in the absence of ClpP.</text>
</comment>
<comment type="subunit">
    <text evidence="1">Component of the ClpX-ClpP complex. Forms a hexameric ring that, in the presence of ATP, binds to fourteen ClpP subunits assembled into a disk-like structure with a central cavity, resembling the structure of eukaryotic proteasomes.</text>
</comment>
<comment type="similarity">
    <text evidence="1">Belongs to the ClpX chaperone family.</text>
</comment>
<feature type="chain" id="PRO_1000123845" description="ATP-dependent Clp protease ATP-binding subunit ClpX">
    <location>
        <begin position="1"/>
        <end position="425"/>
    </location>
</feature>
<feature type="domain" description="ClpX-type ZB" evidence="2">
    <location>
        <begin position="6"/>
        <end position="59"/>
    </location>
</feature>
<feature type="binding site" evidence="2">
    <location>
        <position position="18"/>
    </location>
    <ligand>
        <name>Zn(2+)</name>
        <dbReference type="ChEBI" id="CHEBI:29105"/>
    </ligand>
</feature>
<feature type="binding site" evidence="2">
    <location>
        <position position="21"/>
    </location>
    <ligand>
        <name>Zn(2+)</name>
        <dbReference type="ChEBI" id="CHEBI:29105"/>
    </ligand>
</feature>
<feature type="binding site" evidence="2">
    <location>
        <position position="40"/>
    </location>
    <ligand>
        <name>Zn(2+)</name>
        <dbReference type="ChEBI" id="CHEBI:29105"/>
    </ligand>
</feature>
<feature type="binding site" evidence="2">
    <location>
        <position position="43"/>
    </location>
    <ligand>
        <name>Zn(2+)</name>
        <dbReference type="ChEBI" id="CHEBI:29105"/>
    </ligand>
</feature>
<feature type="binding site" evidence="1">
    <location>
        <begin position="122"/>
        <end position="129"/>
    </location>
    <ligand>
        <name>ATP</name>
        <dbReference type="ChEBI" id="CHEBI:30616"/>
    </ligand>
</feature>
<reference key="1">
    <citation type="journal article" date="2009" name="Appl. Environ. Microbiol.">
        <title>Rhizobium sp. strain NGR234 possesses a remarkable number of secretion systems.</title>
        <authorList>
            <person name="Schmeisser C."/>
            <person name="Liesegang H."/>
            <person name="Krysciak D."/>
            <person name="Bakkou N."/>
            <person name="Le Quere A."/>
            <person name="Wollherr A."/>
            <person name="Heinemeyer I."/>
            <person name="Morgenstern B."/>
            <person name="Pommerening-Roeser A."/>
            <person name="Flores M."/>
            <person name="Palacios R."/>
            <person name="Brenner S."/>
            <person name="Gottschalk G."/>
            <person name="Schmitz R.A."/>
            <person name="Broughton W.J."/>
            <person name="Perret X."/>
            <person name="Strittmatter A.W."/>
            <person name="Streit W.R."/>
        </authorList>
    </citation>
    <scope>NUCLEOTIDE SEQUENCE [LARGE SCALE GENOMIC DNA]</scope>
    <source>
        <strain>NBRC 101917 / NGR234</strain>
    </source>
</reference>
<keyword id="KW-0067">ATP-binding</keyword>
<keyword id="KW-0143">Chaperone</keyword>
<keyword id="KW-0479">Metal-binding</keyword>
<keyword id="KW-0547">Nucleotide-binding</keyword>
<keyword id="KW-1185">Reference proteome</keyword>
<keyword id="KW-0862">Zinc</keyword>
<protein>
    <recommendedName>
        <fullName evidence="1">ATP-dependent Clp protease ATP-binding subunit ClpX</fullName>
    </recommendedName>
</protein>
<evidence type="ECO:0000255" key="1">
    <source>
        <dbReference type="HAMAP-Rule" id="MF_00175"/>
    </source>
</evidence>
<evidence type="ECO:0000255" key="2">
    <source>
        <dbReference type="PROSITE-ProRule" id="PRU01250"/>
    </source>
</evidence>
<organism>
    <name type="scientific">Sinorhizobium fredii (strain NBRC 101917 / NGR234)</name>
    <dbReference type="NCBI Taxonomy" id="394"/>
    <lineage>
        <taxon>Bacteria</taxon>
        <taxon>Pseudomonadati</taxon>
        <taxon>Pseudomonadota</taxon>
        <taxon>Alphaproteobacteria</taxon>
        <taxon>Hyphomicrobiales</taxon>
        <taxon>Rhizobiaceae</taxon>
        <taxon>Sinorhizobium/Ensifer group</taxon>
        <taxon>Sinorhizobium</taxon>
    </lineage>
</organism>
<gene>
    <name evidence="1" type="primary">clpX</name>
    <name type="ordered locus">NGR_c10350</name>
</gene>
<proteinExistence type="inferred from homology"/>
<name>CLPX_SINFN</name>